<gene>
    <name evidence="1" type="primary">ung</name>
    <name type="ordered locus">SPs1232</name>
</gene>
<name>UNG_STRPQ</name>
<accession>P0DG75</accession>
<accession>Q8K7U9</accession>
<feature type="chain" id="PRO_0000411627" description="Uracil-DNA glycosylase">
    <location>
        <begin position="1"/>
        <end position="217"/>
    </location>
</feature>
<feature type="active site" description="Proton acceptor" evidence="1">
    <location>
        <position position="62"/>
    </location>
</feature>
<dbReference type="EC" id="3.2.2.27" evidence="1"/>
<dbReference type="EMBL" id="BA000034">
    <property type="protein sequence ID" value="BAC64327.1"/>
    <property type="molecule type" value="Genomic_DNA"/>
</dbReference>
<dbReference type="RefSeq" id="WP_002994022.1">
    <property type="nucleotide sequence ID" value="NC_004606.1"/>
</dbReference>
<dbReference type="SMR" id="P0DG75"/>
<dbReference type="KEGG" id="sps:SPs1232"/>
<dbReference type="HOGENOM" id="CLU_032162_3_1_9"/>
<dbReference type="GO" id="GO:0005737">
    <property type="term" value="C:cytoplasm"/>
    <property type="evidence" value="ECO:0007669"/>
    <property type="project" value="UniProtKB-SubCell"/>
</dbReference>
<dbReference type="GO" id="GO:0004844">
    <property type="term" value="F:uracil DNA N-glycosylase activity"/>
    <property type="evidence" value="ECO:0007669"/>
    <property type="project" value="UniProtKB-UniRule"/>
</dbReference>
<dbReference type="GO" id="GO:0097510">
    <property type="term" value="P:base-excision repair, AP site formation via deaminated base removal"/>
    <property type="evidence" value="ECO:0007669"/>
    <property type="project" value="TreeGrafter"/>
</dbReference>
<dbReference type="CDD" id="cd10027">
    <property type="entry name" value="UDG-F1-like"/>
    <property type="match status" value="1"/>
</dbReference>
<dbReference type="FunFam" id="3.40.470.10:FF:000008">
    <property type="entry name" value="Uracil-DNA glycosylase"/>
    <property type="match status" value="1"/>
</dbReference>
<dbReference type="Gene3D" id="3.40.470.10">
    <property type="entry name" value="Uracil-DNA glycosylase-like domain"/>
    <property type="match status" value="1"/>
</dbReference>
<dbReference type="HAMAP" id="MF_00148">
    <property type="entry name" value="UDG"/>
    <property type="match status" value="1"/>
</dbReference>
<dbReference type="InterPro" id="IPR002043">
    <property type="entry name" value="UDG_fam1"/>
</dbReference>
<dbReference type="InterPro" id="IPR018085">
    <property type="entry name" value="Ura-DNA_Glyclase_AS"/>
</dbReference>
<dbReference type="InterPro" id="IPR005122">
    <property type="entry name" value="Uracil-DNA_glycosylase-like"/>
</dbReference>
<dbReference type="InterPro" id="IPR036895">
    <property type="entry name" value="Uracil-DNA_glycosylase-like_sf"/>
</dbReference>
<dbReference type="NCBIfam" id="NF003588">
    <property type="entry name" value="PRK05254.1-1"/>
    <property type="match status" value="1"/>
</dbReference>
<dbReference type="NCBIfam" id="NF003589">
    <property type="entry name" value="PRK05254.1-2"/>
    <property type="match status" value="1"/>
</dbReference>
<dbReference type="NCBIfam" id="NF003592">
    <property type="entry name" value="PRK05254.1-5"/>
    <property type="match status" value="1"/>
</dbReference>
<dbReference type="NCBIfam" id="TIGR00628">
    <property type="entry name" value="ung"/>
    <property type="match status" value="1"/>
</dbReference>
<dbReference type="PANTHER" id="PTHR11264">
    <property type="entry name" value="URACIL-DNA GLYCOSYLASE"/>
    <property type="match status" value="1"/>
</dbReference>
<dbReference type="PANTHER" id="PTHR11264:SF0">
    <property type="entry name" value="URACIL-DNA GLYCOSYLASE"/>
    <property type="match status" value="1"/>
</dbReference>
<dbReference type="Pfam" id="PF03167">
    <property type="entry name" value="UDG"/>
    <property type="match status" value="1"/>
</dbReference>
<dbReference type="SMART" id="SM00986">
    <property type="entry name" value="UDG"/>
    <property type="match status" value="1"/>
</dbReference>
<dbReference type="SMART" id="SM00987">
    <property type="entry name" value="UreE_C"/>
    <property type="match status" value="1"/>
</dbReference>
<dbReference type="SUPFAM" id="SSF52141">
    <property type="entry name" value="Uracil-DNA glycosylase-like"/>
    <property type="match status" value="1"/>
</dbReference>
<dbReference type="PROSITE" id="PS00130">
    <property type="entry name" value="U_DNA_GLYCOSYLASE"/>
    <property type="match status" value="1"/>
</dbReference>
<proteinExistence type="inferred from homology"/>
<protein>
    <recommendedName>
        <fullName evidence="1">Uracil-DNA glycosylase</fullName>
        <shortName evidence="1">UDG</shortName>
        <ecNumber evidence="1">3.2.2.27</ecNumber>
    </recommendedName>
</protein>
<reference key="1">
    <citation type="journal article" date="2003" name="Genome Res.">
        <title>Genome sequence of an M3 strain of Streptococcus pyogenes reveals a large-scale genomic rearrangement in invasive strains and new insights into phage evolution.</title>
        <authorList>
            <person name="Nakagawa I."/>
            <person name="Kurokawa K."/>
            <person name="Yamashita A."/>
            <person name="Nakata M."/>
            <person name="Tomiyasu Y."/>
            <person name="Okahashi N."/>
            <person name="Kawabata S."/>
            <person name="Yamazaki K."/>
            <person name="Shiba T."/>
            <person name="Yasunaga T."/>
            <person name="Hayashi H."/>
            <person name="Hattori M."/>
            <person name="Hamada S."/>
        </authorList>
    </citation>
    <scope>NUCLEOTIDE SEQUENCE [LARGE SCALE GENOMIC DNA]</scope>
    <source>
        <strain>SSI-1</strain>
    </source>
</reference>
<organism>
    <name type="scientific">Streptococcus pyogenes serotype M3 (strain SSI-1)</name>
    <dbReference type="NCBI Taxonomy" id="193567"/>
    <lineage>
        <taxon>Bacteria</taxon>
        <taxon>Bacillati</taxon>
        <taxon>Bacillota</taxon>
        <taxon>Bacilli</taxon>
        <taxon>Lactobacillales</taxon>
        <taxon>Streptococcaceae</taxon>
        <taxon>Streptococcus</taxon>
    </lineage>
</organism>
<evidence type="ECO:0000255" key="1">
    <source>
        <dbReference type="HAMAP-Rule" id="MF_00148"/>
    </source>
</evidence>
<keyword id="KW-0963">Cytoplasm</keyword>
<keyword id="KW-0227">DNA damage</keyword>
<keyword id="KW-0234">DNA repair</keyword>
<keyword id="KW-0378">Hydrolase</keyword>
<comment type="function">
    <text evidence="1">Excises uracil residues from the DNA which can arise as a result of misincorporation of dUMP residues by DNA polymerase or due to deamination of cytosine.</text>
</comment>
<comment type="catalytic activity">
    <reaction evidence="1">
        <text>Hydrolyzes single-stranded DNA or mismatched double-stranded DNA and polynucleotides, releasing free uracil.</text>
        <dbReference type="EC" id="3.2.2.27"/>
    </reaction>
</comment>
<comment type="subcellular location">
    <subcellularLocation>
        <location evidence="1">Cytoplasm</location>
    </subcellularLocation>
</comment>
<comment type="similarity">
    <text evidence="1">Belongs to the uracil-DNA glycosylase (UDG) superfamily. UNG family.</text>
</comment>
<sequence>MAHSIWHEKIKSFLPEHYYGRINHFLDEAYASGLVYPQRENVFKALQVTPLEETKVLILGQDPYHGPKQAQGLSFSVPEEISAPPSLINILKELADDIGPRDHHDLSTWASQGVLLLNACLTVPAGQANGHAGLIWEPFTDAVIKVLNEKDSPVVFILWGAYARKKKAFITNPKHHIIESPHPSPLSSYRGFFGSKPFSRTNAILEKEGMTGVDWLK</sequence>